<organism>
    <name type="scientific">Streptococcus thermophilus (strain ATCC BAA-491 / LMD-9)</name>
    <dbReference type="NCBI Taxonomy" id="322159"/>
    <lineage>
        <taxon>Bacteria</taxon>
        <taxon>Bacillati</taxon>
        <taxon>Bacillota</taxon>
        <taxon>Bacilli</taxon>
        <taxon>Lactobacillales</taxon>
        <taxon>Streptococcaceae</taxon>
        <taxon>Streptococcus</taxon>
    </lineage>
</organism>
<comment type="function">
    <text evidence="1">Catalyzes the conversion of glucosamine-6-phosphate to glucosamine-1-phosphate.</text>
</comment>
<comment type="catalytic activity">
    <reaction evidence="1">
        <text>alpha-D-glucosamine 1-phosphate = D-glucosamine 6-phosphate</text>
        <dbReference type="Rhea" id="RHEA:23424"/>
        <dbReference type="ChEBI" id="CHEBI:58516"/>
        <dbReference type="ChEBI" id="CHEBI:58725"/>
        <dbReference type="EC" id="5.4.2.10"/>
    </reaction>
</comment>
<comment type="cofactor">
    <cofactor evidence="1">
        <name>Mg(2+)</name>
        <dbReference type="ChEBI" id="CHEBI:18420"/>
    </cofactor>
    <text evidence="1">Binds 1 Mg(2+) ion per subunit.</text>
</comment>
<comment type="PTM">
    <text evidence="1">Activated by phosphorylation.</text>
</comment>
<comment type="similarity">
    <text evidence="1">Belongs to the phosphohexose mutase family.</text>
</comment>
<sequence length="450" mass="47931">MGKYFGTDGVRGEANVELTPELAFKLGRFGGYVLSQHETGRPKVFVARDTRISGEMLESALVAGLLSVGIEVYKLGVLATPGVSYLVRTENASAGVMISASHNPALDNGIKFFGGDGFKLDDAREAEIEALLDAAEDTLPRPSAEGLGTLVDYPEGLRKYEKFLVTTGLDLGGMKVALDAANGAAAVSARNIFLDLNAEIAVIGDQPDGLNINAGVGSTHPEQLQALVRESGSAIGLAFDGDSDRLIAVDENGDIVDGDKVMYIIGKYLSQKGELAKNTIVTTVMSNLGFHKALDREGINKAVTAVGDRYVVEEMRKNGYNLGGEQSGHVIIMDYNTTGDGQLTAIQLTKVMVETGKSLSELAAEVTIYPQKLVNIRVENSMKDKAMDVPAIAAIIEKMEAEMAGNGRILVRPSGTEPLLRVMAEAPTDDEVNYYVDTIADVVRAEIGLD</sequence>
<dbReference type="EC" id="5.4.2.10" evidence="1"/>
<dbReference type="EMBL" id="CP000419">
    <property type="protein sequence ID" value="ABJ66418.1"/>
    <property type="molecule type" value="Genomic_DNA"/>
</dbReference>
<dbReference type="RefSeq" id="WP_011226155.1">
    <property type="nucleotide sequence ID" value="NC_008532.1"/>
</dbReference>
<dbReference type="SMR" id="Q03K54"/>
<dbReference type="GeneID" id="66899041"/>
<dbReference type="KEGG" id="ste:STER_1230"/>
<dbReference type="HOGENOM" id="CLU_016950_7_0_9"/>
<dbReference type="GO" id="GO:0005829">
    <property type="term" value="C:cytosol"/>
    <property type="evidence" value="ECO:0007669"/>
    <property type="project" value="TreeGrafter"/>
</dbReference>
<dbReference type="GO" id="GO:0000287">
    <property type="term" value="F:magnesium ion binding"/>
    <property type="evidence" value="ECO:0007669"/>
    <property type="project" value="UniProtKB-UniRule"/>
</dbReference>
<dbReference type="GO" id="GO:0008966">
    <property type="term" value="F:phosphoglucosamine mutase activity"/>
    <property type="evidence" value="ECO:0007669"/>
    <property type="project" value="UniProtKB-UniRule"/>
</dbReference>
<dbReference type="GO" id="GO:0004615">
    <property type="term" value="F:phosphomannomutase activity"/>
    <property type="evidence" value="ECO:0007669"/>
    <property type="project" value="TreeGrafter"/>
</dbReference>
<dbReference type="GO" id="GO:0005975">
    <property type="term" value="P:carbohydrate metabolic process"/>
    <property type="evidence" value="ECO:0007669"/>
    <property type="project" value="InterPro"/>
</dbReference>
<dbReference type="GO" id="GO:0009252">
    <property type="term" value="P:peptidoglycan biosynthetic process"/>
    <property type="evidence" value="ECO:0007669"/>
    <property type="project" value="TreeGrafter"/>
</dbReference>
<dbReference type="GO" id="GO:0006048">
    <property type="term" value="P:UDP-N-acetylglucosamine biosynthetic process"/>
    <property type="evidence" value="ECO:0007669"/>
    <property type="project" value="TreeGrafter"/>
</dbReference>
<dbReference type="CDD" id="cd05802">
    <property type="entry name" value="GlmM"/>
    <property type="match status" value="1"/>
</dbReference>
<dbReference type="FunFam" id="3.30.310.50:FF:000001">
    <property type="entry name" value="Phosphoglucosamine mutase"/>
    <property type="match status" value="1"/>
</dbReference>
<dbReference type="FunFam" id="3.40.120.10:FF:000001">
    <property type="entry name" value="Phosphoglucosamine mutase"/>
    <property type="match status" value="1"/>
</dbReference>
<dbReference type="FunFam" id="3.40.120.10:FF:000002">
    <property type="entry name" value="Phosphoglucosamine mutase"/>
    <property type="match status" value="1"/>
</dbReference>
<dbReference type="Gene3D" id="3.40.120.10">
    <property type="entry name" value="Alpha-D-Glucose-1,6-Bisphosphate, subunit A, domain 3"/>
    <property type="match status" value="3"/>
</dbReference>
<dbReference type="Gene3D" id="3.30.310.50">
    <property type="entry name" value="Alpha-D-phosphohexomutase, C-terminal domain"/>
    <property type="match status" value="1"/>
</dbReference>
<dbReference type="HAMAP" id="MF_01554_B">
    <property type="entry name" value="GlmM_B"/>
    <property type="match status" value="1"/>
</dbReference>
<dbReference type="InterPro" id="IPR005844">
    <property type="entry name" value="A-D-PHexomutase_a/b/a-I"/>
</dbReference>
<dbReference type="InterPro" id="IPR016055">
    <property type="entry name" value="A-D-PHexomutase_a/b/a-I/II/III"/>
</dbReference>
<dbReference type="InterPro" id="IPR005845">
    <property type="entry name" value="A-D-PHexomutase_a/b/a-II"/>
</dbReference>
<dbReference type="InterPro" id="IPR005846">
    <property type="entry name" value="A-D-PHexomutase_a/b/a-III"/>
</dbReference>
<dbReference type="InterPro" id="IPR005843">
    <property type="entry name" value="A-D-PHexomutase_C"/>
</dbReference>
<dbReference type="InterPro" id="IPR036900">
    <property type="entry name" value="A-D-PHexomutase_C_sf"/>
</dbReference>
<dbReference type="InterPro" id="IPR016066">
    <property type="entry name" value="A-D-PHexomutase_CS"/>
</dbReference>
<dbReference type="InterPro" id="IPR005841">
    <property type="entry name" value="Alpha-D-phosphohexomutase_SF"/>
</dbReference>
<dbReference type="InterPro" id="IPR006352">
    <property type="entry name" value="GlmM_bact"/>
</dbReference>
<dbReference type="InterPro" id="IPR050060">
    <property type="entry name" value="Phosphoglucosamine_mutase"/>
</dbReference>
<dbReference type="NCBIfam" id="TIGR01455">
    <property type="entry name" value="glmM"/>
    <property type="match status" value="1"/>
</dbReference>
<dbReference type="PANTHER" id="PTHR42946:SF1">
    <property type="entry name" value="PHOSPHOGLUCOMUTASE (ALPHA-D-GLUCOSE-1,6-BISPHOSPHATE-DEPENDENT)"/>
    <property type="match status" value="1"/>
</dbReference>
<dbReference type="PANTHER" id="PTHR42946">
    <property type="entry name" value="PHOSPHOHEXOSE MUTASE"/>
    <property type="match status" value="1"/>
</dbReference>
<dbReference type="Pfam" id="PF02878">
    <property type="entry name" value="PGM_PMM_I"/>
    <property type="match status" value="1"/>
</dbReference>
<dbReference type="Pfam" id="PF02879">
    <property type="entry name" value="PGM_PMM_II"/>
    <property type="match status" value="1"/>
</dbReference>
<dbReference type="Pfam" id="PF02880">
    <property type="entry name" value="PGM_PMM_III"/>
    <property type="match status" value="1"/>
</dbReference>
<dbReference type="Pfam" id="PF00408">
    <property type="entry name" value="PGM_PMM_IV"/>
    <property type="match status" value="1"/>
</dbReference>
<dbReference type="PRINTS" id="PR00509">
    <property type="entry name" value="PGMPMM"/>
</dbReference>
<dbReference type="SUPFAM" id="SSF55957">
    <property type="entry name" value="Phosphoglucomutase, C-terminal domain"/>
    <property type="match status" value="1"/>
</dbReference>
<dbReference type="SUPFAM" id="SSF53738">
    <property type="entry name" value="Phosphoglucomutase, first 3 domains"/>
    <property type="match status" value="3"/>
</dbReference>
<dbReference type="PROSITE" id="PS00710">
    <property type="entry name" value="PGM_PMM"/>
    <property type="match status" value="1"/>
</dbReference>
<gene>
    <name evidence="1" type="primary">glmM</name>
    <name type="ordered locus">STER_1230</name>
</gene>
<name>GLMM_STRTD</name>
<evidence type="ECO:0000255" key="1">
    <source>
        <dbReference type="HAMAP-Rule" id="MF_01554"/>
    </source>
</evidence>
<protein>
    <recommendedName>
        <fullName evidence="1">Phosphoglucosamine mutase</fullName>
        <ecNumber evidence="1">5.4.2.10</ecNumber>
    </recommendedName>
</protein>
<accession>Q03K54</accession>
<keyword id="KW-0413">Isomerase</keyword>
<keyword id="KW-0460">Magnesium</keyword>
<keyword id="KW-0479">Metal-binding</keyword>
<keyword id="KW-0597">Phosphoprotein</keyword>
<proteinExistence type="inferred from homology"/>
<feature type="chain" id="PRO_0000301393" description="Phosphoglucosamine mutase">
    <location>
        <begin position="1"/>
        <end position="450"/>
    </location>
</feature>
<feature type="active site" description="Phosphoserine intermediate" evidence="1">
    <location>
        <position position="101"/>
    </location>
</feature>
<feature type="binding site" description="via phosphate group" evidence="1">
    <location>
        <position position="101"/>
    </location>
    <ligand>
        <name>Mg(2+)</name>
        <dbReference type="ChEBI" id="CHEBI:18420"/>
    </ligand>
</feature>
<feature type="binding site" evidence="1">
    <location>
        <position position="240"/>
    </location>
    <ligand>
        <name>Mg(2+)</name>
        <dbReference type="ChEBI" id="CHEBI:18420"/>
    </ligand>
</feature>
<feature type="binding site" evidence="1">
    <location>
        <position position="242"/>
    </location>
    <ligand>
        <name>Mg(2+)</name>
        <dbReference type="ChEBI" id="CHEBI:18420"/>
    </ligand>
</feature>
<feature type="binding site" evidence="1">
    <location>
        <position position="244"/>
    </location>
    <ligand>
        <name>Mg(2+)</name>
        <dbReference type="ChEBI" id="CHEBI:18420"/>
    </ligand>
</feature>
<feature type="modified residue" description="Phosphoserine" evidence="1">
    <location>
        <position position="101"/>
    </location>
</feature>
<reference key="1">
    <citation type="journal article" date="2006" name="Proc. Natl. Acad. Sci. U.S.A.">
        <title>Comparative genomics of the lactic acid bacteria.</title>
        <authorList>
            <person name="Makarova K.S."/>
            <person name="Slesarev A."/>
            <person name="Wolf Y.I."/>
            <person name="Sorokin A."/>
            <person name="Mirkin B."/>
            <person name="Koonin E.V."/>
            <person name="Pavlov A."/>
            <person name="Pavlova N."/>
            <person name="Karamychev V."/>
            <person name="Polouchine N."/>
            <person name="Shakhova V."/>
            <person name="Grigoriev I."/>
            <person name="Lou Y."/>
            <person name="Rohksar D."/>
            <person name="Lucas S."/>
            <person name="Huang K."/>
            <person name="Goodstein D.M."/>
            <person name="Hawkins T."/>
            <person name="Plengvidhya V."/>
            <person name="Welker D."/>
            <person name="Hughes J."/>
            <person name="Goh Y."/>
            <person name="Benson A."/>
            <person name="Baldwin K."/>
            <person name="Lee J.-H."/>
            <person name="Diaz-Muniz I."/>
            <person name="Dosti B."/>
            <person name="Smeianov V."/>
            <person name="Wechter W."/>
            <person name="Barabote R."/>
            <person name="Lorca G."/>
            <person name="Altermann E."/>
            <person name="Barrangou R."/>
            <person name="Ganesan B."/>
            <person name="Xie Y."/>
            <person name="Rawsthorne H."/>
            <person name="Tamir D."/>
            <person name="Parker C."/>
            <person name="Breidt F."/>
            <person name="Broadbent J.R."/>
            <person name="Hutkins R."/>
            <person name="O'Sullivan D."/>
            <person name="Steele J."/>
            <person name="Unlu G."/>
            <person name="Saier M.H. Jr."/>
            <person name="Klaenhammer T."/>
            <person name="Richardson P."/>
            <person name="Kozyavkin S."/>
            <person name="Weimer B.C."/>
            <person name="Mills D.A."/>
        </authorList>
    </citation>
    <scope>NUCLEOTIDE SEQUENCE [LARGE SCALE GENOMIC DNA]</scope>
    <source>
        <strain>ATCC BAA-491 / LMD-9</strain>
    </source>
</reference>